<dbReference type="EC" id="4.99.1.3" evidence="1"/>
<dbReference type="EMBL" id="CP001402">
    <property type="protein sequence ID" value="ACR42345.1"/>
    <property type="molecule type" value="Genomic_DNA"/>
</dbReference>
<dbReference type="RefSeq" id="WP_012711674.1">
    <property type="nucleotide sequence ID" value="NC_012726.1"/>
</dbReference>
<dbReference type="SMR" id="C4KID1"/>
<dbReference type="KEGG" id="sid:M164_1741"/>
<dbReference type="HOGENOM" id="CLU_065901_2_1_2"/>
<dbReference type="UniPathway" id="UPA00148">
    <property type="reaction ID" value="UER00223"/>
</dbReference>
<dbReference type="Proteomes" id="UP000001479">
    <property type="component" value="Chromosome"/>
</dbReference>
<dbReference type="GO" id="GO:0050897">
    <property type="term" value="F:cobalt ion binding"/>
    <property type="evidence" value="ECO:0007669"/>
    <property type="project" value="UniProtKB-UniRule"/>
</dbReference>
<dbReference type="GO" id="GO:0016852">
    <property type="term" value="F:sirohydrochlorin cobaltochelatase activity"/>
    <property type="evidence" value="ECO:0007669"/>
    <property type="project" value="UniProtKB-UniRule"/>
</dbReference>
<dbReference type="GO" id="GO:0019251">
    <property type="term" value="P:anaerobic cobalamin biosynthetic process"/>
    <property type="evidence" value="ECO:0007669"/>
    <property type="project" value="UniProtKB-UniRule"/>
</dbReference>
<dbReference type="CDD" id="cd03416">
    <property type="entry name" value="CbiX_SirB_N"/>
    <property type="match status" value="1"/>
</dbReference>
<dbReference type="Gene3D" id="3.40.50.1400">
    <property type="match status" value="1"/>
</dbReference>
<dbReference type="HAMAP" id="MF_00785">
    <property type="entry name" value="CbiX"/>
    <property type="match status" value="1"/>
</dbReference>
<dbReference type="InterPro" id="IPR002762">
    <property type="entry name" value="CbiX-like"/>
</dbReference>
<dbReference type="InterPro" id="IPR023652">
    <property type="entry name" value="SiroHydchlorin_Cochelatase"/>
</dbReference>
<dbReference type="InterPro" id="IPR050963">
    <property type="entry name" value="Sirohydro_Cobaltochel/CbiX"/>
</dbReference>
<dbReference type="PANTHER" id="PTHR33542">
    <property type="entry name" value="SIROHYDROCHLORIN FERROCHELATASE, CHLOROPLASTIC"/>
    <property type="match status" value="1"/>
</dbReference>
<dbReference type="PANTHER" id="PTHR33542:SF3">
    <property type="entry name" value="SIROHYDROCHLORIN FERROCHELATASE, CHLOROPLASTIC"/>
    <property type="match status" value="1"/>
</dbReference>
<dbReference type="Pfam" id="PF01903">
    <property type="entry name" value="CbiX"/>
    <property type="match status" value="1"/>
</dbReference>
<dbReference type="SUPFAM" id="SSF53800">
    <property type="entry name" value="Chelatase"/>
    <property type="match status" value="1"/>
</dbReference>
<comment type="function">
    <text evidence="1">Catalyzes the insertion of Co(2+) into sirohydrochlorin as part of the anaerobic pathway to cobalamin biosynthesis.</text>
</comment>
<comment type="catalytic activity">
    <reaction evidence="1">
        <text>Co-sirohydrochlorin + 2 H(+) = sirohydrochlorin + Co(2+)</text>
        <dbReference type="Rhea" id="RHEA:15893"/>
        <dbReference type="ChEBI" id="CHEBI:15378"/>
        <dbReference type="ChEBI" id="CHEBI:48828"/>
        <dbReference type="ChEBI" id="CHEBI:58351"/>
        <dbReference type="ChEBI" id="CHEBI:60049"/>
        <dbReference type="EC" id="4.99.1.3"/>
    </reaction>
</comment>
<comment type="pathway">
    <text evidence="1">Cofactor biosynthesis; adenosylcobalamin biosynthesis; cob(II)yrinate a,c-diamide from sirohydrochlorin (anaerobic route): step 1/10.</text>
</comment>
<comment type="subunit">
    <text evidence="1">Homotetramer; dimer of dimers.</text>
</comment>
<comment type="similarity">
    <text evidence="1">Belongs to the CbiX family. CbiXS subfamily.</text>
</comment>
<keyword id="KW-0169">Cobalamin biosynthesis</keyword>
<keyword id="KW-0170">Cobalt</keyword>
<keyword id="KW-0456">Lyase</keyword>
<keyword id="KW-0479">Metal-binding</keyword>
<proteinExistence type="inferred from homology"/>
<feature type="chain" id="PRO_1000212924" description="Sirohydrochlorin cobaltochelatase">
    <location>
        <begin position="1"/>
        <end position="128"/>
    </location>
</feature>
<feature type="active site" description="Proton acceptor" evidence="1">
    <location>
        <position position="9"/>
    </location>
</feature>
<feature type="binding site" evidence="1">
    <location>
        <position position="9"/>
    </location>
    <ligand>
        <name>Co(2+)</name>
        <dbReference type="ChEBI" id="CHEBI:48828"/>
    </ligand>
</feature>
<feature type="binding site" evidence="1">
    <location>
        <position position="43"/>
    </location>
    <ligand>
        <name>substrate</name>
    </ligand>
</feature>
<feature type="binding site" evidence="1">
    <location>
        <begin position="68"/>
        <end position="73"/>
    </location>
    <ligand>
        <name>substrate</name>
    </ligand>
</feature>
<feature type="binding site" evidence="1">
    <location>
        <position position="73"/>
    </location>
    <ligand>
        <name>Co(2+)</name>
        <dbReference type="ChEBI" id="CHEBI:48828"/>
    </ligand>
</feature>
<reference key="1">
    <citation type="journal article" date="2009" name="Proc. Natl. Acad. Sci. U.S.A.">
        <title>Biogeography of the Sulfolobus islandicus pan-genome.</title>
        <authorList>
            <person name="Reno M.L."/>
            <person name="Held N.L."/>
            <person name="Fields C.J."/>
            <person name="Burke P.V."/>
            <person name="Whitaker R.J."/>
        </authorList>
    </citation>
    <scope>NUCLEOTIDE SEQUENCE [LARGE SCALE GENOMIC DNA]</scope>
    <source>
        <strain>M.16.4 / Kamchatka #3</strain>
    </source>
</reference>
<organism>
    <name type="scientific">Saccharolobus islandicus (strain M.16.4 / Kamchatka #3)</name>
    <name type="common">Sulfolobus islandicus</name>
    <dbReference type="NCBI Taxonomy" id="426118"/>
    <lineage>
        <taxon>Archaea</taxon>
        <taxon>Thermoproteota</taxon>
        <taxon>Thermoprotei</taxon>
        <taxon>Sulfolobales</taxon>
        <taxon>Sulfolobaceae</taxon>
        <taxon>Saccharolobus</taxon>
    </lineage>
</organism>
<gene>
    <name evidence="1" type="primary">cbiX</name>
    <name type="ordered locus">M164_1741</name>
</gene>
<protein>
    <recommendedName>
        <fullName evidence="1">Sirohydrochlorin cobaltochelatase</fullName>
        <ecNumber evidence="1">4.99.1.3</ecNumber>
    </recommendedName>
    <alternativeName>
        <fullName evidence="1">CbiXS</fullName>
    </alternativeName>
</protein>
<accession>C4KID1</accession>
<name>CBIX_SACI6</name>
<sequence length="128" mass="14531">MLGVLLVLHGSKIPEWKDVGIKYAEYLSRYFNLVEFGFLEFNKPTLSEALSNLLAKGANKIVVVPLLFATGTHFKRDIPRLLGIDGDEKKIQYMGKEIEIIIADPLGFDEKIGEVLVKRVNETYNKNY</sequence>
<evidence type="ECO:0000255" key="1">
    <source>
        <dbReference type="HAMAP-Rule" id="MF_00785"/>
    </source>
</evidence>